<organism>
    <name type="scientific">Xenopus laevis</name>
    <name type="common">African clawed frog</name>
    <dbReference type="NCBI Taxonomy" id="8355"/>
    <lineage>
        <taxon>Eukaryota</taxon>
        <taxon>Metazoa</taxon>
        <taxon>Chordata</taxon>
        <taxon>Craniata</taxon>
        <taxon>Vertebrata</taxon>
        <taxon>Euteleostomi</taxon>
        <taxon>Amphibia</taxon>
        <taxon>Batrachia</taxon>
        <taxon>Anura</taxon>
        <taxon>Pipoidea</taxon>
        <taxon>Pipidae</taxon>
        <taxon>Xenopodinae</taxon>
        <taxon>Xenopus</taxon>
        <taxon>Xenopus</taxon>
    </lineage>
</organism>
<accession>Q6GPY6</accession>
<keyword id="KW-0966">Cell projection</keyword>
<keyword id="KW-0969">Cilium</keyword>
<keyword id="KW-0963">Cytoplasm</keyword>
<keyword id="KW-0206">Cytoskeleton</keyword>
<keyword id="KW-0493">Microtubule</keyword>
<keyword id="KW-0539">Nucleus</keyword>
<keyword id="KW-1185">Reference proteome</keyword>
<gene>
    <name type="primary">cfap20</name>
</gene>
<name>CFA20_XENLA</name>
<feature type="chain" id="PRO_0000296403" description="Cilia- and flagella-associated protein 20">
    <location>
        <begin position="1"/>
        <end position="193"/>
    </location>
</feature>
<dbReference type="EMBL" id="BC072969">
    <property type="protein sequence ID" value="AAH72969.1"/>
    <property type="molecule type" value="mRNA"/>
</dbReference>
<dbReference type="RefSeq" id="NP_001085578.1">
    <property type="nucleotide sequence ID" value="NM_001092109.1"/>
</dbReference>
<dbReference type="RefSeq" id="XP_018121938.1">
    <property type="nucleotide sequence ID" value="XM_018266449.1"/>
</dbReference>
<dbReference type="SMR" id="Q6GPY6"/>
<dbReference type="DNASU" id="444004"/>
<dbReference type="GeneID" id="108695480"/>
<dbReference type="GeneID" id="444004"/>
<dbReference type="KEGG" id="xla:108695480"/>
<dbReference type="AGR" id="Xenbase:XB-GENE-17346209"/>
<dbReference type="CTD" id="108695480"/>
<dbReference type="CTD" id="444004"/>
<dbReference type="Xenbase" id="XB-GENE-17346209">
    <property type="gene designation" value="cfap20.S"/>
</dbReference>
<dbReference type="OMA" id="CAGGCWA"/>
<dbReference type="OrthoDB" id="7486196at2759"/>
<dbReference type="Proteomes" id="UP000186698">
    <property type="component" value="Chromosome 6S"/>
</dbReference>
<dbReference type="Bgee" id="108695480">
    <property type="expression patterns" value="Expressed in testis and 19 other cell types or tissues"/>
</dbReference>
<dbReference type="GO" id="GO:0005879">
    <property type="term" value="C:axonemal microtubule"/>
    <property type="evidence" value="ECO:0000250"/>
    <property type="project" value="UniProtKB"/>
</dbReference>
<dbReference type="GO" id="GO:0005814">
    <property type="term" value="C:centriole"/>
    <property type="evidence" value="ECO:0000250"/>
    <property type="project" value="UniProtKB"/>
</dbReference>
<dbReference type="GO" id="GO:0036064">
    <property type="term" value="C:ciliary basal body"/>
    <property type="evidence" value="ECO:0000250"/>
    <property type="project" value="UniProtKB"/>
</dbReference>
<dbReference type="GO" id="GO:0005929">
    <property type="term" value="C:cilium"/>
    <property type="evidence" value="ECO:0000250"/>
    <property type="project" value="UniProtKB"/>
</dbReference>
<dbReference type="GO" id="GO:0031514">
    <property type="term" value="C:motile cilium"/>
    <property type="evidence" value="ECO:0000318"/>
    <property type="project" value="GO_Central"/>
</dbReference>
<dbReference type="GO" id="GO:0005634">
    <property type="term" value="C:nucleus"/>
    <property type="evidence" value="ECO:0007669"/>
    <property type="project" value="UniProtKB-SubCell"/>
</dbReference>
<dbReference type="GO" id="GO:0060271">
    <property type="term" value="P:cilium assembly"/>
    <property type="evidence" value="ECO:0000250"/>
    <property type="project" value="UniProtKB"/>
</dbReference>
<dbReference type="GO" id="GO:2000147">
    <property type="term" value="P:positive regulation of cell motility"/>
    <property type="evidence" value="ECO:0000250"/>
    <property type="project" value="UniProtKB"/>
</dbReference>
<dbReference type="GO" id="GO:2000253">
    <property type="term" value="P:positive regulation of feeding behavior"/>
    <property type="evidence" value="ECO:0000250"/>
    <property type="project" value="UniProtKB"/>
</dbReference>
<dbReference type="GO" id="GO:0018095">
    <property type="term" value="P:protein polyglutamylation"/>
    <property type="evidence" value="ECO:0000250"/>
    <property type="project" value="UniProtKB"/>
</dbReference>
<dbReference type="GO" id="GO:0060296">
    <property type="term" value="P:regulation of cilium beat frequency involved in ciliary motility"/>
    <property type="evidence" value="ECO:0000250"/>
    <property type="project" value="UniProtKB"/>
</dbReference>
<dbReference type="InterPro" id="IPR040441">
    <property type="entry name" value="CFA20/CFAP20DC"/>
</dbReference>
<dbReference type="InterPro" id="IPR007714">
    <property type="entry name" value="CFA20_dom"/>
</dbReference>
<dbReference type="PANTHER" id="PTHR12458">
    <property type="entry name" value="ORF PROTEIN"/>
    <property type="match status" value="1"/>
</dbReference>
<dbReference type="Pfam" id="PF05018">
    <property type="entry name" value="CFA20_dom"/>
    <property type="match status" value="1"/>
</dbReference>
<proteinExistence type="evidence at transcript level"/>
<reference key="1">
    <citation type="submission" date="2004-06" db="EMBL/GenBank/DDBJ databases">
        <authorList>
            <consortium name="NIH - Xenopus Gene Collection (XGC) project"/>
        </authorList>
    </citation>
    <scope>NUCLEOTIDE SEQUENCE [LARGE SCALE MRNA]</scope>
    <source>
        <tissue>Spleen</tissue>
    </source>
</reference>
<comment type="function">
    <text evidence="2">Cilium- and flagellum-specific protein that plays a role in axonemal structure organization and motility. Microtubule inner protein (MIP) part of the dynein-decorated doublet microtubules (DMTs) in cilia axoneme, which is required for motile cilia beating. Involved in the regulation of the size and morphology of cilia. Required for axonemal microtubules polyglutamylation.</text>
</comment>
<comment type="subcellular location">
    <subcellularLocation>
        <location evidence="2">Nucleus</location>
    </subcellularLocation>
    <subcellularLocation>
        <location evidence="2">Cytoplasm</location>
        <location evidence="2">Cytoskeleton</location>
        <location evidence="2">Microtubule organizing center</location>
        <location evidence="2">Centrosome</location>
        <location evidence="2">Centriole</location>
    </subcellularLocation>
    <subcellularLocation>
        <location evidence="2">Cytoplasm</location>
        <location evidence="2">Cytoskeleton</location>
        <location evidence="2">Cilium basal body</location>
    </subcellularLocation>
    <subcellularLocation>
        <location evidence="1">Cytoplasm</location>
        <location evidence="1">Cytoskeleton</location>
        <location evidence="1">Cilium axoneme</location>
    </subcellularLocation>
</comment>
<comment type="similarity">
    <text evidence="3">Belongs to the CFAP20 family.</text>
</comment>
<sequence>MFKNTFQSGFLSILYSIGSKPLQIWDKKVRNGHIKRITDNDIQSLVLEVEGTNVSTTYITCPADPKKTLGIKLPFLVMIIKNLKKYFTFEVQVLDDKNVRRRFRASNYQSTTRVKPFICTMPMRLDDGWNQIQFNLSDFTRRAYGTNYIETLRVQIHANCRIRRVYFSDRLYSEDELPAEFKLYLPVQNKAKQ</sequence>
<evidence type="ECO:0000250" key="1">
    <source>
        <dbReference type="UniProtKB" id="Q6B857"/>
    </source>
</evidence>
<evidence type="ECO:0000250" key="2">
    <source>
        <dbReference type="UniProtKB" id="Q9Y6A4"/>
    </source>
</evidence>
<evidence type="ECO:0000305" key="3"/>
<protein>
    <recommendedName>
        <fullName>Cilia- and flagella-associated protein 20</fullName>
    </recommendedName>
</protein>